<organism>
    <name type="scientific">Brucella melitensis biotype 2 (strain ATCC 23457)</name>
    <dbReference type="NCBI Taxonomy" id="546272"/>
    <lineage>
        <taxon>Bacteria</taxon>
        <taxon>Pseudomonadati</taxon>
        <taxon>Pseudomonadota</taxon>
        <taxon>Alphaproteobacteria</taxon>
        <taxon>Hyphomicrobiales</taxon>
        <taxon>Brucellaceae</taxon>
        <taxon>Brucella/Ochrobactrum group</taxon>
        <taxon>Brucella</taxon>
    </lineage>
</organism>
<reference key="1">
    <citation type="submission" date="2009-03" db="EMBL/GenBank/DDBJ databases">
        <title>Brucella melitensis ATCC 23457 whole genome shotgun sequencing project.</title>
        <authorList>
            <person name="Setubal J.C."/>
            <person name="Boyle S."/>
            <person name="Crasta O.R."/>
            <person name="Gillespie J.J."/>
            <person name="Kenyon R.W."/>
            <person name="Lu J."/>
            <person name="Mane S."/>
            <person name="Nagrani S."/>
            <person name="Shallom J.M."/>
            <person name="Shallom S."/>
            <person name="Shukla M."/>
            <person name="Snyder E.E."/>
            <person name="Sobral B.W."/>
            <person name="Wattam A.R."/>
            <person name="Will R."/>
            <person name="Williams K."/>
            <person name="Yoo H."/>
            <person name="Munk C."/>
            <person name="Tapia R."/>
            <person name="Han C."/>
            <person name="Detter J.C."/>
            <person name="Bruce D."/>
            <person name="Brettin T.S."/>
        </authorList>
    </citation>
    <scope>NUCLEOTIDE SEQUENCE [LARGE SCALE GENOMIC DNA]</scope>
    <source>
        <strain>ATCC 23457</strain>
    </source>
</reference>
<gene>
    <name evidence="1" type="primary">rpsQ</name>
    <name type="ordered locus">BMEA_A1269</name>
</gene>
<feature type="chain" id="PRO_1000166465" description="Small ribosomal subunit protein uS17">
    <location>
        <begin position="1"/>
        <end position="80"/>
    </location>
</feature>
<name>RS17_BRUMB</name>
<dbReference type="EMBL" id="CP001488">
    <property type="protein sequence ID" value="ACO01000.1"/>
    <property type="molecule type" value="Genomic_DNA"/>
</dbReference>
<dbReference type="RefSeq" id="WP_002964353.1">
    <property type="nucleotide sequence ID" value="NC_012441.1"/>
</dbReference>
<dbReference type="SMR" id="C0RJJ2"/>
<dbReference type="GeneID" id="97533533"/>
<dbReference type="KEGG" id="bmi:BMEA_A1269"/>
<dbReference type="HOGENOM" id="CLU_073626_1_1_5"/>
<dbReference type="Proteomes" id="UP000001748">
    <property type="component" value="Chromosome I"/>
</dbReference>
<dbReference type="GO" id="GO:0022627">
    <property type="term" value="C:cytosolic small ribosomal subunit"/>
    <property type="evidence" value="ECO:0007669"/>
    <property type="project" value="TreeGrafter"/>
</dbReference>
<dbReference type="GO" id="GO:0019843">
    <property type="term" value="F:rRNA binding"/>
    <property type="evidence" value="ECO:0007669"/>
    <property type="project" value="UniProtKB-UniRule"/>
</dbReference>
<dbReference type="GO" id="GO:0003735">
    <property type="term" value="F:structural constituent of ribosome"/>
    <property type="evidence" value="ECO:0007669"/>
    <property type="project" value="InterPro"/>
</dbReference>
<dbReference type="GO" id="GO:0006412">
    <property type="term" value="P:translation"/>
    <property type="evidence" value="ECO:0007669"/>
    <property type="project" value="UniProtKB-UniRule"/>
</dbReference>
<dbReference type="CDD" id="cd00364">
    <property type="entry name" value="Ribosomal_uS17"/>
    <property type="match status" value="1"/>
</dbReference>
<dbReference type="Gene3D" id="2.40.50.140">
    <property type="entry name" value="Nucleic acid-binding proteins"/>
    <property type="match status" value="1"/>
</dbReference>
<dbReference type="HAMAP" id="MF_01345_B">
    <property type="entry name" value="Ribosomal_uS17_B"/>
    <property type="match status" value="1"/>
</dbReference>
<dbReference type="InterPro" id="IPR012340">
    <property type="entry name" value="NA-bd_OB-fold"/>
</dbReference>
<dbReference type="InterPro" id="IPR000266">
    <property type="entry name" value="Ribosomal_uS17"/>
</dbReference>
<dbReference type="InterPro" id="IPR019984">
    <property type="entry name" value="Ribosomal_uS17_bact/chlr"/>
</dbReference>
<dbReference type="NCBIfam" id="NF004123">
    <property type="entry name" value="PRK05610.1"/>
    <property type="match status" value="1"/>
</dbReference>
<dbReference type="NCBIfam" id="TIGR03635">
    <property type="entry name" value="uS17_bact"/>
    <property type="match status" value="1"/>
</dbReference>
<dbReference type="PANTHER" id="PTHR10744">
    <property type="entry name" value="40S RIBOSOMAL PROTEIN S11 FAMILY MEMBER"/>
    <property type="match status" value="1"/>
</dbReference>
<dbReference type="PANTHER" id="PTHR10744:SF1">
    <property type="entry name" value="SMALL RIBOSOMAL SUBUNIT PROTEIN US17M"/>
    <property type="match status" value="1"/>
</dbReference>
<dbReference type="Pfam" id="PF00366">
    <property type="entry name" value="Ribosomal_S17"/>
    <property type="match status" value="1"/>
</dbReference>
<dbReference type="PRINTS" id="PR00973">
    <property type="entry name" value="RIBOSOMALS17"/>
</dbReference>
<dbReference type="SUPFAM" id="SSF50249">
    <property type="entry name" value="Nucleic acid-binding proteins"/>
    <property type="match status" value="1"/>
</dbReference>
<comment type="function">
    <text evidence="1">One of the primary rRNA binding proteins, it binds specifically to the 5'-end of 16S ribosomal RNA.</text>
</comment>
<comment type="subunit">
    <text evidence="1">Part of the 30S ribosomal subunit.</text>
</comment>
<comment type="similarity">
    <text evidence="1">Belongs to the universal ribosomal protein uS17 family.</text>
</comment>
<protein>
    <recommendedName>
        <fullName evidence="1">Small ribosomal subunit protein uS17</fullName>
    </recommendedName>
    <alternativeName>
        <fullName evidence="2">30S ribosomal protein S17</fullName>
    </alternativeName>
</protein>
<evidence type="ECO:0000255" key="1">
    <source>
        <dbReference type="HAMAP-Rule" id="MF_01345"/>
    </source>
</evidence>
<evidence type="ECO:0000305" key="2"/>
<keyword id="KW-0687">Ribonucleoprotein</keyword>
<keyword id="KW-0689">Ribosomal protein</keyword>
<keyword id="KW-0694">RNA-binding</keyword>
<keyword id="KW-0699">rRNA-binding</keyword>
<sequence>MPKRVLQGVVVSDKNDKTVVVKVERRYSHPLLQKTVRQSKKYKAHDENNQFKVGDFVSIQESAPISKDKRWVVLTSEAAG</sequence>
<accession>C0RJJ2</accession>
<proteinExistence type="inferred from homology"/>